<reference evidence="6" key="1">
    <citation type="submission" date="2006-08" db="EMBL/GenBank/DDBJ databases">
        <authorList>
            <consortium name="NIH - Mammalian Gene Collection (MGC) project"/>
        </authorList>
    </citation>
    <scope>NUCLEOTIDE SEQUENCE [LARGE SCALE MRNA]</scope>
    <source>
        <strain evidence="6">Crossbred X Angus</strain>
        <tissue evidence="6">Liver</tissue>
    </source>
</reference>
<name>ZMAT3_BOVIN</name>
<gene>
    <name evidence="3" type="primary">ZMAT3</name>
</gene>
<protein>
    <recommendedName>
        <fullName>Zinc finger matrin-type protein 3</fullName>
    </recommendedName>
</protein>
<accession>Q0IIC4</accession>
<evidence type="ECO:0000250" key="1"/>
<evidence type="ECO:0000250" key="2">
    <source>
        <dbReference type="UniProtKB" id="O08781"/>
    </source>
</evidence>
<evidence type="ECO:0000250" key="3">
    <source>
        <dbReference type="UniProtKB" id="Q9HA38"/>
    </source>
</evidence>
<evidence type="ECO:0000255" key="4"/>
<evidence type="ECO:0000256" key="5">
    <source>
        <dbReference type="SAM" id="MobiDB-lite"/>
    </source>
</evidence>
<evidence type="ECO:0000312" key="6">
    <source>
        <dbReference type="EMBL" id="AAI22711.1"/>
    </source>
</evidence>
<dbReference type="EMBL" id="BC122710">
    <property type="protein sequence ID" value="AAI22711.1"/>
    <property type="molecule type" value="mRNA"/>
</dbReference>
<dbReference type="RefSeq" id="NP_001069576.1">
    <property type="nucleotide sequence ID" value="NM_001076108.1"/>
</dbReference>
<dbReference type="RefSeq" id="XP_005201717.1">
    <property type="nucleotide sequence ID" value="XM_005201660.3"/>
</dbReference>
<dbReference type="RefSeq" id="XP_059741649.1">
    <property type="nucleotide sequence ID" value="XM_059885666.1"/>
</dbReference>
<dbReference type="RefSeq" id="XP_059741656.1">
    <property type="nucleotide sequence ID" value="XM_059885673.1"/>
</dbReference>
<dbReference type="SMR" id="Q0IIC4"/>
<dbReference type="FunCoup" id="Q0IIC4">
    <property type="interactions" value="254"/>
</dbReference>
<dbReference type="STRING" id="9913.ENSBTAP00000016535"/>
<dbReference type="PaxDb" id="9913-ENSBTAP00000016535"/>
<dbReference type="GeneID" id="538512"/>
<dbReference type="KEGG" id="bta:538512"/>
<dbReference type="CTD" id="64393"/>
<dbReference type="VEuPathDB" id="HostDB:ENSBTAG00000012463"/>
<dbReference type="eggNOG" id="ENOG502QW4K">
    <property type="taxonomic scope" value="Eukaryota"/>
</dbReference>
<dbReference type="HOGENOM" id="CLU_051920_1_0_1"/>
<dbReference type="InParanoid" id="Q0IIC4"/>
<dbReference type="OMA" id="YRGKNHA"/>
<dbReference type="OrthoDB" id="434647at2759"/>
<dbReference type="TreeFam" id="TF350019"/>
<dbReference type="Proteomes" id="UP000009136">
    <property type="component" value="Chromosome 1"/>
</dbReference>
<dbReference type="Bgee" id="ENSBTAG00000012463">
    <property type="expression patterns" value="Expressed in occipital lobe and 95 other cell types or tissues"/>
</dbReference>
<dbReference type="GO" id="GO:0005730">
    <property type="term" value="C:nucleolus"/>
    <property type="evidence" value="ECO:0007669"/>
    <property type="project" value="UniProtKB-SubCell"/>
</dbReference>
<dbReference type="GO" id="GO:0003723">
    <property type="term" value="F:RNA binding"/>
    <property type="evidence" value="ECO:0007669"/>
    <property type="project" value="UniProtKB-KW"/>
</dbReference>
<dbReference type="GO" id="GO:0008270">
    <property type="term" value="F:zinc ion binding"/>
    <property type="evidence" value="ECO:0007669"/>
    <property type="project" value="UniProtKB-KW"/>
</dbReference>
<dbReference type="GO" id="GO:0006915">
    <property type="term" value="P:apoptotic process"/>
    <property type="evidence" value="ECO:0007669"/>
    <property type="project" value="UniProtKB-KW"/>
</dbReference>
<dbReference type="GO" id="GO:0006974">
    <property type="term" value="P:DNA damage response"/>
    <property type="evidence" value="ECO:0007669"/>
    <property type="project" value="UniProtKB-KW"/>
</dbReference>
<dbReference type="GO" id="GO:0015031">
    <property type="term" value="P:protein transport"/>
    <property type="evidence" value="ECO:0007669"/>
    <property type="project" value="UniProtKB-KW"/>
</dbReference>
<dbReference type="FunFam" id="3.30.160.60:FF:000285">
    <property type="entry name" value="Zinc finger matrin-type protein 3"/>
    <property type="match status" value="2"/>
</dbReference>
<dbReference type="FunFam" id="3.30.160.60:FF:000612">
    <property type="entry name" value="Zinc finger matrin-type protein 3"/>
    <property type="match status" value="1"/>
</dbReference>
<dbReference type="Gene3D" id="3.30.160.60">
    <property type="entry name" value="Classic Zinc Finger"/>
    <property type="match status" value="3"/>
</dbReference>
<dbReference type="InterPro" id="IPR003604">
    <property type="entry name" value="Matrin/U1-like-C_Znf_C2H2"/>
</dbReference>
<dbReference type="InterPro" id="IPR052644">
    <property type="entry name" value="ZMAT3"/>
</dbReference>
<dbReference type="InterPro" id="IPR022755">
    <property type="entry name" value="Znf_C2H2_jaz"/>
</dbReference>
<dbReference type="InterPro" id="IPR036236">
    <property type="entry name" value="Znf_C2H2_sf"/>
</dbReference>
<dbReference type="InterPro" id="IPR013087">
    <property type="entry name" value="Znf_C2H2_type"/>
</dbReference>
<dbReference type="PANTHER" id="PTHR46786">
    <property type="entry name" value="ZINC FINGER MATRIN-TYPE PROTEIN 3"/>
    <property type="match status" value="1"/>
</dbReference>
<dbReference type="PANTHER" id="PTHR46786:SF1">
    <property type="entry name" value="ZINC FINGER MATRIN-TYPE PROTEIN 3"/>
    <property type="match status" value="1"/>
</dbReference>
<dbReference type="Pfam" id="PF12171">
    <property type="entry name" value="zf-C2H2_jaz"/>
    <property type="match status" value="1"/>
</dbReference>
<dbReference type="Pfam" id="PF12874">
    <property type="entry name" value="zf-met"/>
    <property type="match status" value="2"/>
</dbReference>
<dbReference type="SMART" id="SM00355">
    <property type="entry name" value="ZnF_C2H2"/>
    <property type="match status" value="3"/>
</dbReference>
<dbReference type="SMART" id="SM00451">
    <property type="entry name" value="ZnF_U1"/>
    <property type="match status" value="3"/>
</dbReference>
<dbReference type="SUPFAM" id="SSF57667">
    <property type="entry name" value="beta-beta-alpha zinc fingers"/>
    <property type="match status" value="3"/>
</dbReference>
<sequence length="289" mass="31829">MILLQHAGLPPPKRPSSSPPMSVAARSTGALQLPPQKPFGQEASLPLAGEEEPPKGGEQDTALEELCKPLYCKLCNVTLNSAQQAQAHYQGKNHGKKLRNYYAANSCPPPARMSNAVEAVAAPAVSVPPQMGSFKPGGRVILATENDYCKLCDASFSSPAVAQAHYQGKNHAKRLRLAEAQSNSFSDSSEVGQRRTRKEGNEYKMMPNRRNMYAVQNNSAGPYFNPRSRQRIPRDLAMCVTPSGQFYCSMCNVGAGEEVEFRQHLESKQHKSKVSEQRYRNEMENLGYV</sequence>
<comment type="function">
    <text evidence="1">Acts as a bona fide target gene of p53/TP53. May play a role in the TP53-dependent growth regulatory pathway. May contribute to TP53-mediated apoptosis by regulation of TP53 expression and translocation to the nucleus and nucleolus (By similarity).</text>
</comment>
<comment type="subunit">
    <text evidence="3">Interacts with dsRNA.</text>
</comment>
<comment type="subcellular location">
    <subcellularLocation>
        <location evidence="2">Nucleus</location>
    </subcellularLocation>
    <subcellularLocation>
        <location evidence="2">Nucleus</location>
        <location evidence="2">Nucleolus</location>
    </subcellularLocation>
</comment>
<keyword id="KW-0053">Apoptosis</keyword>
<keyword id="KW-0227">DNA damage</keyword>
<keyword id="KW-0341">Growth regulation</keyword>
<keyword id="KW-0479">Metal-binding</keyword>
<keyword id="KW-0539">Nucleus</keyword>
<keyword id="KW-0653">Protein transport</keyword>
<keyword id="KW-1185">Reference proteome</keyword>
<keyword id="KW-0677">Repeat</keyword>
<keyword id="KW-0694">RNA-binding</keyword>
<keyword id="KW-0811">Translocation</keyword>
<keyword id="KW-0813">Transport</keyword>
<keyword id="KW-0862">Zinc</keyword>
<keyword id="KW-0863">Zinc-finger</keyword>
<proteinExistence type="evidence at transcript level"/>
<feature type="chain" id="PRO_0000310778" description="Zinc finger matrin-type protein 3">
    <location>
        <begin position="1"/>
        <end position="289"/>
    </location>
</feature>
<feature type="zinc finger region" description="Matrin-type 1" evidence="4">
    <location>
        <begin position="70"/>
        <end position="100"/>
    </location>
</feature>
<feature type="zinc finger region" description="Matrin-type 2" evidence="4">
    <location>
        <begin position="147"/>
        <end position="177"/>
    </location>
</feature>
<feature type="zinc finger region" description="Matrin-type 3" evidence="4">
    <location>
        <begin position="246"/>
        <end position="276"/>
    </location>
</feature>
<feature type="region of interest" description="Disordered" evidence="5">
    <location>
        <begin position="1"/>
        <end position="59"/>
    </location>
</feature>
<feature type="region of interest" description="Disordered" evidence="5">
    <location>
        <begin position="180"/>
        <end position="200"/>
    </location>
</feature>
<feature type="compositionally biased region" description="Pro residues" evidence="5">
    <location>
        <begin position="9"/>
        <end position="18"/>
    </location>
</feature>
<feature type="compositionally biased region" description="Polar residues" evidence="5">
    <location>
        <begin position="180"/>
        <end position="191"/>
    </location>
</feature>
<organism>
    <name type="scientific">Bos taurus</name>
    <name type="common">Bovine</name>
    <dbReference type="NCBI Taxonomy" id="9913"/>
    <lineage>
        <taxon>Eukaryota</taxon>
        <taxon>Metazoa</taxon>
        <taxon>Chordata</taxon>
        <taxon>Craniata</taxon>
        <taxon>Vertebrata</taxon>
        <taxon>Euteleostomi</taxon>
        <taxon>Mammalia</taxon>
        <taxon>Eutheria</taxon>
        <taxon>Laurasiatheria</taxon>
        <taxon>Artiodactyla</taxon>
        <taxon>Ruminantia</taxon>
        <taxon>Pecora</taxon>
        <taxon>Bovidae</taxon>
        <taxon>Bovinae</taxon>
        <taxon>Bos</taxon>
    </lineage>
</organism>